<organism>
    <name type="scientific">Salmonella paratyphi A (strain ATCC 9150 / SARB42)</name>
    <dbReference type="NCBI Taxonomy" id="295319"/>
    <lineage>
        <taxon>Bacteria</taxon>
        <taxon>Pseudomonadati</taxon>
        <taxon>Pseudomonadota</taxon>
        <taxon>Gammaproteobacteria</taxon>
        <taxon>Enterobacterales</taxon>
        <taxon>Enterobacteriaceae</taxon>
        <taxon>Salmonella</taxon>
    </lineage>
</organism>
<gene>
    <name evidence="1" type="primary">lpxD</name>
    <name type="ordered locus">SPA0233</name>
</gene>
<sequence length="341" mass="35930">MPSIRLADLAEQLDAELHGDGDIVITGVASMQSATTGHITFMVNPKYREHLGLCQASAVVMTQDDLPFAKSAALVVKNPYLTYARMAQILDTTPQPAQNIAPSAVIDATATLGSNVSVGANAVIESGVQLGDNVVIGAGCFVGKNSKIGAGSRLWANVTIYHDIQIGENCLIQSSTVIGADGFGYANDRGNWVKIPQLGRVIIGDRVEIGACTTIDRGALDDTVIGNGVIIDNQCQIAHNVVIGDNTAVAGGVIMAGSLKIGRYCMIGGASVINGHMEICDKVTVTGMGMVMRPITEPGVYSSGIPLQPNKVWRKTAALVMNIDDMSKRLKAIERKVNQQD</sequence>
<keyword id="KW-0012">Acyltransferase</keyword>
<keyword id="KW-0441">Lipid A biosynthesis</keyword>
<keyword id="KW-0444">Lipid biosynthesis</keyword>
<keyword id="KW-0443">Lipid metabolism</keyword>
<keyword id="KW-0677">Repeat</keyword>
<keyword id="KW-0808">Transferase</keyword>
<comment type="function">
    <text evidence="1">Catalyzes the N-acylation of UDP-3-O-(hydroxytetradecanoyl)glucosamine using 3-hydroxytetradecanoyl-ACP as the acyl donor. Is involved in the biosynthesis of lipid A, a phosphorylated glycolipid that anchors the lipopolysaccharide to the outer membrane of the cell.</text>
</comment>
<comment type="catalytic activity">
    <reaction evidence="1">
        <text>a UDP-3-O-[(3R)-3-hydroxyacyl]-alpha-D-glucosamine + a (3R)-hydroxyacyl-[ACP] = a UDP-2-N,3-O-bis[(3R)-3-hydroxyacyl]-alpha-D-glucosamine + holo-[ACP] + H(+)</text>
        <dbReference type="Rhea" id="RHEA:53836"/>
        <dbReference type="Rhea" id="RHEA-COMP:9685"/>
        <dbReference type="Rhea" id="RHEA-COMP:9945"/>
        <dbReference type="ChEBI" id="CHEBI:15378"/>
        <dbReference type="ChEBI" id="CHEBI:64479"/>
        <dbReference type="ChEBI" id="CHEBI:78827"/>
        <dbReference type="ChEBI" id="CHEBI:137740"/>
        <dbReference type="ChEBI" id="CHEBI:137748"/>
        <dbReference type="EC" id="2.3.1.191"/>
    </reaction>
</comment>
<comment type="catalytic activity">
    <reaction evidence="1">
        <text>UDP-3-O-[(3R)-3-hydroxytetradecanoyl]-alpha-D-glucosamine + (3R)-hydroxytetradecanoyl-[ACP] = UDP-2-N,3-O-bis[(3R)-3-hydroxytetradecanoyl]-alpha-D-glucosamine + holo-[ACP] + H(+)</text>
        <dbReference type="Rhea" id="RHEA:17817"/>
        <dbReference type="Rhea" id="RHEA-COMP:9646"/>
        <dbReference type="Rhea" id="RHEA-COMP:9685"/>
        <dbReference type="ChEBI" id="CHEBI:15378"/>
        <dbReference type="ChEBI" id="CHEBI:64479"/>
        <dbReference type="ChEBI" id="CHEBI:71573"/>
        <dbReference type="ChEBI" id="CHEBI:78474"/>
        <dbReference type="ChEBI" id="CHEBI:78847"/>
    </reaction>
</comment>
<comment type="pathway">
    <text evidence="1">Glycolipid biosynthesis; lipid IV(A) biosynthesis; lipid IV(A) from (3R)-3-hydroxytetradecanoyl-[acyl-carrier-protein] and UDP-N-acetyl-alpha-D-glucosamine: step 3/6.</text>
</comment>
<comment type="subunit">
    <text evidence="1">Homotrimer.</text>
</comment>
<comment type="similarity">
    <text evidence="1">Belongs to the transferase hexapeptide repeat family. LpxD subfamily.</text>
</comment>
<accession>Q5PD75</accession>
<protein>
    <recommendedName>
        <fullName evidence="1">UDP-3-O-(3-hydroxymyristoyl)glucosamine N-acyltransferase</fullName>
        <shortName evidence="1">UDP-3-O-(3-OHC14)-GlcN N-acyltransferase</shortName>
        <ecNumber evidence="1">2.3.1.191</ecNumber>
    </recommendedName>
    <alternativeName>
        <fullName evidence="1">UDP-3-O-(3-hydroxytetradecanoyl)glucosamine N-acyltransferase</fullName>
    </alternativeName>
</protein>
<evidence type="ECO:0000255" key="1">
    <source>
        <dbReference type="HAMAP-Rule" id="MF_00523"/>
    </source>
</evidence>
<reference key="1">
    <citation type="journal article" date="2004" name="Nat. Genet.">
        <title>Comparison of genome degradation in Paratyphi A and Typhi, human-restricted serovars of Salmonella enterica that cause typhoid.</title>
        <authorList>
            <person name="McClelland M."/>
            <person name="Sanderson K.E."/>
            <person name="Clifton S.W."/>
            <person name="Latreille P."/>
            <person name="Porwollik S."/>
            <person name="Sabo A."/>
            <person name="Meyer R."/>
            <person name="Bieri T."/>
            <person name="Ozersky P."/>
            <person name="McLellan M."/>
            <person name="Harkins C.R."/>
            <person name="Wang C."/>
            <person name="Nguyen C."/>
            <person name="Berghoff A."/>
            <person name="Elliott G."/>
            <person name="Kohlberg S."/>
            <person name="Strong C."/>
            <person name="Du F."/>
            <person name="Carter J."/>
            <person name="Kremizki C."/>
            <person name="Layman D."/>
            <person name="Leonard S."/>
            <person name="Sun H."/>
            <person name="Fulton L."/>
            <person name="Nash W."/>
            <person name="Miner T."/>
            <person name="Minx P."/>
            <person name="Delehaunty K."/>
            <person name="Fronick C."/>
            <person name="Magrini V."/>
            <person name="Nhan M."/>
            <person name="Warren W."/>
            <person name="Florea L."/>
            <person name="Spieth J."/>
            <person name="Wilson R.K."/>
        </authorList>
    </citation>
    <scope>NUCLEOTIDE SEQUENCE [LARGE SCALE GENOMIC DNA]</scope>
    <source>
        <strain>ATCC 9150 / SARB42</strain>
    </source>
</reference>
<feature type="chain" id="PRO_0000264433" description="UDP-3-O-(3-hydroxymyristoyl)glucosamine N-acyltransferase">
    <location>
        <begin position="1"/>
        <end position="341"/>
    </location>
</feature>
<feature type="active site" description="Proton acceptor" evidence="1">
    <location>
        <position position="239"/>
    </location>
</feature>
<dbReference type="EC" id="2.3.1.191" evidence="1"/>
<dbReference type="EMBL" id="CP000026">
    <property type="protein sequence ID" value="AAV76262.1"/>
    <property type="molecule type" value="Genomic_DNA"/>
</dbReference>
<dbReference type="RefSeq" id="WP_001139265.1">
    <property type="nucleotide sequence ID" value="NC_006511.1"/>
</dbReference>
<dbReference type="SMR" id="Q5PD75"/>
<dbReference type="KEGG" id="spt:SPA0233"/>
<dbReference type="HOGENOM" id="CLU_049865_0_1_6"/>
<dbReference type="UniPathway" id="UPA00359">
    <property type="reaction ID" value="UER00479"/>
</dbReference>
<dbReference type="Proteomes" id="UP000008185">
    <property type="component" value="Chromosome"/>
</dbReference>
<dbReference type="GO" id="GO:0016020">
    <property type="term" value="C:membrane"/>
    <property type="evidence" value="ECO:0007669"/>
    <property type="project" value="GOC"/>
</dbReference>
<dbReference type="GO" id="GO:0016410">
    <property type="term" value="F:N-acyltransferase activity"/>
    <property type="evidence" value="ECO:0007669"/>
    <property type="project" value="InterPro"/>
</dbReference>
<dbReference type="GO" id="GO:0103118">
    <property type="term" value="F:UDP-3-O-(R-3-hydroxymyristoyl)-glucosamine N-acyltransferase activity"/>
    <property type="evidence" value="ECO:0007669"/>
    <property type="project" value="UniProtKB-EC"/>
</dbReference>
<dbReference type="GO" id="GO:0009245">
    <property type="term" value="P:lipid A biosynthetic process"/>
    <property type="evidence" value="ECO:0007669"/>
    <property type="project" value="UniProtKB-UniRule"/>
</dbReference>
<dbReference type="CDD" id="cd03352">
    <property type="entry name" value="LbH_LpxD"/>
    <property type="match status" value="1"/>
</dbReference>
<dbReference type="FunFam" id="1.20.5.170:FF:000032">
    <property type="entry name" value="UDP-3-O-(3-hydroxymyristoyl)glucosamine N-acyltransferase"/>
    <property type="match status" value="1"/>
</dbReference>
<dbReference type="FunFam" id="2.160.10.10:FF:000005">
    <property type="entry name" value="UDP-3-O-(3-hydroxymyristoyl)glucosamine N-acyltransferase"/>
    <property type="match status" value="1"/>
</dbReference>
<dbReference type="FunFam" id="3.40.1390.10:FF:000001">
    <property type="entry name" value="UDP-3-O-(3-hydroxymyristoyl)glucosamine N-acyltransferase"/>
    <property type="match status" value="1"/>
</dbReference>
<dbReference type="Gene3D" id="1.20.5.170">
    <property type="match status" value="1"/>
</dbReference>
<dbReference type="Gene3D" id="2.160.10.10">
    <property type="entry name" value="Hexapeptide repeat proteins"/>
    <property type="match status" value="1"/>
</dbReference>
<dbReference type="Gene3D" id="3.40.1390.10">
    <property type="entry name" value="MurE/MurF, N-terminal domain"/>
    <property type="match status" value="1"/>
</dbReference>
<dbReference type="HAMAP" id="MF_00523">
    <property type="entry name" value="LpxD"/>
    <property type="match status" value="1"/>
</dbReference>
<dbReference type="InterPro" id="IPR001451">
    <property type="entry name" value="Hexapep"/>
</dbReference>
<dbReference type="InterPro" id="IPR018357">
    <property type="entry name" value="Hexapep_transf_CS"/>
</dbReference>
<dbReference type="InterPro" id="IPR007691">
    <property type="entry name" value="LpxD"/>
</dbReference>
<dbReference type="InterPro" id="IPR011004">
    <property type="entry name" value="Trimer_LpxA-like_sf"/>
</dbReference>
<dbReference type="InterPro" id="IPR020573">
    <property type="entry name" value="UDP_GlcNAc_AcTrfase_non-rep"/>
</dbReference>
<dbReference type="NCBIfam" id="TIGR01853">
    <property type="entry name" value="lipid_A_lpxD"/>
    <property type="match status" value="1"/>
</dbReference>
<dbReference type="NCBIfam" id="NF002060">
    <property type="entry name" value="PRK00892.1"/>
    <property type="match status" value="1"/>
</dbReference>
<dbReference type="PANTHER" id="PTHR43378">
    <property type="entry name" value="UDP-3-O-ACYLGLUCOSAMINE N-ACYLTRANSFERASE"/>
    <property type="match status" value="1"/>
</dbReference>
<dbReference type="PANTHER" id="PTHR43378:SF2">
    <property type="entry name" value="UDP-3-O-ACYLGLUCOSAMINE N-ACYLTRANSFERASE 1, MITOCHONDRIAL-RELATED"/>
    <property type="match status" value="1"/>
</dbReference>
<dbReference type="Pfam" id="PF00132">
    <property type="entry name" value="Hexapep"/>
    <property type="match status" value="3"/>
</dbReference>
<dbReference type="Pfam" id="PF04613">
    <property type="entry name" value="LpxD"/>
    <property type="match status" value="1"/>
</dbReference>
<dbReference type="SUPFAM" id="SSF51161">
    <property type="entry name" value="Trimeric LpxA-like enzymes"/>
    <property type="match status" value="1"/>
</dbReference>
<dbReference type="PROSITE" id="PS00101">
    <property type="entry name" value="HEXAPEP_TRANSFERASES"/>
    <property type="match status" value="4"/>
</dbReference>
<name>LPXD_SALPA</name>
<proteinExistence type="inferred from homology"/>